<name>MIAA_ORITB</name>
<dbReference type="EC" id="2.5.1.75" evidence="1"/>
<dbReference type="EMBL" id="AM494475">
    <property type="protein sequence ID" value="CAM79924.1"/>
    <property type="molecule type" value="Genomic_DNA"/>
</dbReference>
<dbReference type="RefSeq" id="WP_011944682.1">
    <property type="nucleotide sequence ID" value="NC_009488.1"/>
</dbReference>
<dbReference type="SMR" id="A5CDI3"/>
<dbReference type="KEGG" id="ots:OTBS_0858"/>
<dbReference type="eggNOG" id="COG0324">
    <property type="taxonomic scope" value="Bacteria"/>
</dbReference>
<dbReference type="HOGENOM" id="CLU_032616_0_1_5"/>
<dbReference type="Proteomes" id="UP000001565">
    <property type="component" value="Chromosome"/>
</dbReference>
<dbReference type="GO" id="GO:0005524">
    <property type="term" value="F:ATP binding"/>
    <property type="evidence" value="ECO:0007669"/>
    <property type="project" value="UniProtKB-UniRule"/>
</dbReference>
<dbReference type="GO" id="GO:0052381">
    <property type="term" value="F:tRNA dimethylallyltransferase activity"/>
    <property type="evidence" value="ECO:0007669"/>
    <property type="project" value="UniProtKB-UniRule"/>
</dbReference>
<dbReference type="GO" id="GO:0006400">
    <property type="term" value="P:tRNA modification"/>
    <property type="evidence" value="ECO:0007669"/>
    <property type="project" value="TreeGrafter"/>
</dbReference>
<dbReference type="Gene3D" id="1.10.20.140">
    <property type="match status" value="1"/>
</dbReference>
<dbReference type="Gene3D" id="3.40.50.300">
    <property type="entry name" value="P-loop containing nucleotide triphosphate hydrolases"/>
    <property type="match status" value="1"/>
</dbReference>
<dbReference type="HAMAP" id="MF_00185">
    <property type="entry name" value="IPP_trans"/>
    <property type="match status" value="1"/>
</dbReference>
<dbReference type="InterPro" id="IPR039657">
    <property type="entry name" value="Dimethylallyltransferase"/>
</dbReference>
<dbReference type="InterPro" id="IPR018022">
    <property type="entry name" value="IPT"/>
</dbReference>
<dbReference type="InterPro" id="IPR027417">
    <property type="entry name" value="P-loop_NTPase"/>
</dbReference>
<dbReference type="PANTHER" id="PTHR11088">
    <property type="entry name" value="TRNA DIMETHYLALLYLTRANSFERASE"/>
    <property type="match status" value="1"/>
</dbReference>
<dbReference type="PANTHER" id="PTHR11088:SF60">
    <property type="entry name" value="TRNA DIMETHYLALLYLTRANSFERASE"/>
    <property type="match status" value="1"/>
</dbReference>
<dbReference type="Pfam" id="PF01715">
    <property type="entry name" value="IPPT"/>
    <property type="match status" value="1"/>
</dbReference>
<dbReference type="Pfam" id="PF01745">
    <property type="entry name" value="IPT"/>
    <property type="match status" value="1"/>
</dbReference>
<dbReference type="SUPFAM" id="SSF52540">
    <property type="entry name" value="P-loop containing nucleoside triphosphate hydrolases"/>
    <property type="match status" value="2"/>
</dbReference>
<feature type="chain" id="PRO_0000377248" description="tRNA dimethylallyltransferase">
    <location>
        <begin position="1"/>
        <end position="345"/>
    </location>
</feature>
<feature type="region of interest" description="Interaction with substrate tRNA" evidence="1">
    <location>
        <begin position="34"/>
        <end position="37"/>
    </location>
</feature>
<feature type="region of interest" description="Interaction with substrate tRNA" evidence="1">
    <location>
        <begin position="195"/>
        <end position="199"/>
    </location>
</feature>
<feature type="binding site" evidence="1">
    <location>
        <begin position="9"/>
        <end position="16"/>
    </location>
    <ligand>
        <name>ATP</name>
        <dbReference type="ChEBI" id="CHEBI:30616"/>
    </ligand>
</feature>
<feature type="binding site" evidence="1">
    <location>
        <begin position="11"/>
        <end position="16"/>
    </location>
    <ligand>
        <name>substrate</name>
    </ligand>
</feature>
<feature type="site" description="Interaction with substrate tRNA" evidence="1">
    <location>
        <position position="137"/>
    </location>
</feature>
<feature type="site" description="Interaction with substrate tRNA" evidence="1">
    <location>
        <position position="159"/>
    </location>
</feature>
<organism>
    <name type="scientific">Orientia tsutsugamushi (strain Boryong)</name>
    <name type="common">Rickettsia tsutsugamushi</name>
    <dbReference type="NCBI Taxonomy" id="357244"/>
    <lineage>
        <taxon>Bacteria</taxon>
        <taxon>Pseudomonadati</taxon>
        <taxon>Pseudomonadota</taxon>
        <taxon>Alphaproteobacteria</taxon>
        <taxon>Rickettsiales</taxon>
        <taxon>Rickettsiaceae</taxon>
        <taxon>Rickettsieae</taxon>
        <taxon>Orientia</taxon>
    </lineage>
</organism>
<gene>
    <name evidence="1" type="primary">miaA</name>
    <name type="ordered locus">OTBS_0858</name>
</gene>
<accession>A5CDI3</accession>
<comment type="function">
    <text evidence="1">Catalyzes the transfer of a dimethylallyl group onto the adenine at position 37 in tRNAs that read codons beginning with uridine, leading to the formation of N6-(dimethylallyl)adenosine (i(6)A).</text>
</comment>
<comment type="catalytic activity">
    <reaction evidence="1">
        <text>adenosine(37) in tRNA + dimethylallyl diphosphate = N(6)-dimethylallyladenosine(37) in tRNA + diphosphate</text>
        <dbReference type="Rhea" id="RHEA:26482"/>
        <dbReference type="Rhea" id="RHEA-COMP:10162"/>
        <dbReference type="Rhea" id="RHEA-COMP:10375"/>
        <dbReference type="ChEBI" id="CHEBI:33019"/>
        <dbReference type="ChEBI" id="CHEBI:57623"/>
        <dbReference type="ChEBI" id="CHEBI:74411"/>
        <dbReference type="ChEBI" id="CHEBI:74415"/>
        <dbReference type="EC" id="2.5.1.75"/>
    </reaction>
</comment>
<comment type="cofactor">
    <cofactor evidence="1">
        <name>Mg(2+)</name>
        <dbReference type="ChEBI" id="CHEBI:18420"/>
    </cofactor>
</comment>
<comment type="subunit">
    <text evidence="1">Monomer.</text>
</comment>
<comment type="similarity">
    <text evidence="1">Belongs to the IPP transferase family.</text>
</comment>
<keyword id="KW-0067">ATP-binding</keyword>
<keyword id="KW-0460">Magnesium</keyword>
<keyword id="KW-0547">Nucleotide-binding</keyword>
<keyword id="KW-1185">Reference proteome</keyword>
<keyword id="KW-0808">Transferase</keyword>
<keyword id="KW-0819">tRNA processing</keyword>
<sequence length="345" mass="39766">MNDVFIIAGPTASGKSELAMLLAQKFNGVIINADSMQIYKEIPIITASPSISEKKQVDHYLYNYVSIFHSDINELNSFDNISQSKVNANYNNINLQQSITKHLTDRRYSVAQYVQEACKIIRSVIHALKLPIVVGGSGMYIKALVYGIHHIPEITCEIRMQVQDLYKKLTKQEFYQKLIDLDPISKNYIHSSDAQRMIRAYEVALQTNKSIFSYHNSKLVSPLECYNVKKIILLPDRQLLYQNCNQRFAKLATNGELVDEITKIKPYYDHISISAKKALGINEIISYLNQELTIEEAITIAQQKIRQYAKRQLTWFRNQTINGYTLHYQSMSELYKAQVNDVFFN</sequence>
<proteinExistence type="inferred from homology"/>
<evidence type="ECO:0000255" key="1">
    <source>
        <dbReference type="HAMAP-Rule" id="MF_00185"/>
    </source>
</evidence>
<reference key="1">
    <citation type="journal article" date="2007" name="Proc. Natl. Acad. Sci. U.S.A.">
        <title>The Orientia tsutsugamushi genome reveals massive proliferation of conjugative type IV secretion system and host-cell interaction genes.</title>
        <authorList>
            <person name="Cho N.-H."/>
            <person name="Kim H.-R."/>
            <person name="Lee J.-H."/>
            <person name="Kim S.-Y."/>
            <person name="Kim J."/>
            <person name="Cha S."/>
            <person name="Kim S.-Y."/>
            <person name="Darby A.C."/>
            <person name="Fuxelius H.-H."/>
            <person name="Yin J."/>
            <person name="Kim J.H."/>
            <person name="Kim J."/>
            <person name="Lee S.J."/>
            <person name="Koh Y.-S."/>
            <person name="Jang W.-J."/>
            <person name="Park K.-H."/>
            <person name="Andersson S.G.E."/>
            <person name="Choi M.-S."/>
            <person name="Kim I.-S."/>
        </authorList>
    </citation>
    <scope>NUCLEOTIDE SEQUENCE [LARGE SCALE GENOMIC DNA]</scope>
    <source>
        <strain>Boryong</strain>
    </source>
</reference>
<protein>
    <recommendedName>
        <fullName evidence="1">tRNA dimethylallyltransferase</fullName>
        <ecNumber evidence="1">2.5.1.75</ecNumber>
    </recommendedName>
    <alternativeName>
        <fullName evidence="1">Dimethylallyl diphosphate:tRNA dimethylallyltransferase</fullName>
        <shortName evidence="1">DMAPP:tRNA dimethylallyltransferase</shortName>
        <shortName evidence="1">DMATase</shortName>
    </alternativeName>
    <alternativeName>
        <fullName evidence="1">Isopentenyl-diphosphate:tRNA isopentenyltransferase</fullName>
        <shortName evidence="1">IPP transferase</shortName>
        <shortName evidence="1">IPPT</shortName>
        <shortName evidence="1">IPTase</shortName>
    </alternativeName>
</protein>